<feature type="chain" id="PRO_0000265845" description="ATP synthase epsilon chain 1">
    <location>
        <begin position="1"/>
        <end position="135"/>
    </location>
</feature>
<proteinExistence type="inferred from homology"/>
<sequence>MATFHFDLVSPEKLTFSGDVDQVDVPGVEGDFGVLAGHAPVVAAIRPGILTITTGGTPQKIIVLGGLAEVSEKGLTVLADVATSIQELDRAQFADTIASMEAKLAEKEGSELDKAIERLDHFKSIQSQLNTTALH</sequence>
<protein>
    <recommendedName>
        <fullName evidence="1">ATP synthase epsilon chain 1</fullName>
    </recommendedName>
    <alternativeName>
        <fullName evidence="1">ATP synthase F1 sector epsilon subunit 1</fullName>
    </alternativeName>
    <alternativeName>
        <fullName evidence="1">F-ATPase epsilon subunit 1</fullName>
    </alternativeName>
</protein>
<reference key="1">
    <citation type="submission" date="2006-03" db="EMBL/GenBank/DDBJ databases">
        <title>Complete sequence of chromosome of Nitrobacter hamburgensis X14.</title>
        <authorList>
            <consortium name="US DOE Joint Genome Institute"/>
            <person name="Copeland A."/>
            <person name="Lucas S."/>
            <person name="Lapidus A."/>
            <person name="Barry K."/>
            <person name="Detter J.C."/>
            <person name="Glavina del Rio T."/>
            <person name="Hammon N."/>
            <person name="Israni S."/>
            <person name="Dalin E."/>
            <person name="Tice H."/>
            <person name="Pitluck S."/>
            <person name="Chain P."/>
            <person name="Malfatti S."/>
            <person name="Shin M."/>
            <person name="Vergez L."/>
            <person name="Schmutz J."/>
            <person name="Larimer F."/>
            <person name="Land M."/>
            <person name="Hauser L."/>
            <person name="Kyrpides N."/>
            <person name="Ivanova N."/>
            <person name="Ward B."/>
            <person name="Arp D."/>
            <person name="Klotz M."/>
            <person name="Stein L."/>
            <person name="O'Mullan G."/>
            <person name="Starkenburg S."/>
            <person name="Sayavedra L."/>
            <person name="Poret-Peterson A.T."/>
            <person name="Gentry M.E."/>
            <person name="Bruce D."/>
            <person name="Richardson P."/>
        </authorList>
    </citation>
    <scope>NUCLEOTIDE SEQUENCE [LARGE SCALE GENOMIC DNA]</scope>
    <source>
        <strain>DSM 10229 / NCIMB 13809 / X14</strain>
    </source>
</reference>
<accession>Q1QQS9</accession>
<keyword id="KW-0066">ATP synthesis</keyword>
<keyword id="KW-0997">Cell inner membrane</keyword>
<keyword id="KW-1003">Cell membrane</keyword>
<keyword id="KW-0139">CF(1)</keyword>
<keyword id="KW-0375">Hydrogen ion transport</keyword>
<keyword id="KW-0406">Ion transport</keyword>
<keyword id="KW-0472">Membrane</keyword>
<keyword id="KW-1185">Reference proteome</keyword>
<keyword id="KW-0813">Transport</keyword>
<dbReference type="EMBL" id="CP000319">
    <property type="protein sequence ID" value="ABE61418.1"/>
    <property type="molecule type" value="Genomic_DNA"/>
</dbReference>
<dbReference type="RefSeq" id="WP_011509122.1">
    <property type="nucleotide sequence ID" value="NC_007964.1"/>
</dbReference>
<dbReference type="SMR" id="Q1QQS9"/>
<dbReference type="STRING" id="323097.Nham_0528"/>
<dbReference type="KEGG" id="nha:Nham_0528"/>
<dbReference type="eggNOG" id="COG0355">
    <property type="taxonomic scope" value="Bacteria"/>
</dbReference>
<dbReference type="HOGENOM" id="CLU_084338_2_1_5"/>
<dbReference type="OrthoDB" id="9799969at2"/>
<dbReference type="Proteomes" id="UP000001953">
    <property type="component" value="Chromosome"/>
</dbReference>
<dbReference type="GO" id="GO:0005886">
    <property type="term" value="C:plasma membrane"/>
    <property type="evidence" value="ECO:0007669"/>
    <property type="project" value="UniProtKB-SubCell"/>
</dbReference>
<dbReference type="GO" id="GO:0045259">
    <property type="term" value="C:proton-transporting ATP synthase complex"/>
    <property type="evidence" value="ECO:0007669"/>
    <property type="project" value="UniProtKB-KW"/>
</dbReference>
<dbReference type="GO" id="GO:0005524">
    <property type="term" value="F:ATP binding"/>
    <property type="evidence" value="ECO:0007669"/>
    <property type="project" value="UniProtKB-UniRule"/>
</dbReference>
<dbReference type="GO" id="GO:0046933">
    <property type="term" value="F:proton-transporting ATP synthase activity, rotational mechanism"/>
    <property type="evidence" value="ECO:0007669"/>
    <property type="project" value="UniProtKB-UniRule"/>
</dbReference>
<dbReference type="CDD" id="cd12152">
    <property type="entry name" value="F1-ATPase_delta"/>
    <property type="match status" value="1"/>
</dbReference>
<dbReference type="Gene3D" id="2.60.15.10">
    <property type="entry name" value="F0F1 ATP synthase delta/epsilon subunit, N-terminal"/>
    <property type="match status" value="1"/>
</dbReference>
<dbReference type="HAMAP" id="MF_00530">
    <property type="entry name" value="ATP_synth_epsil_bac"/>
    <property type="match status" value="1"/>
</dbReference>
<dbReference type="InterPro" id="IPR001469">
    <property type="entry name" value="ATP_synth_F1_dsu/esu"/>
</dbReference>
<dbReference type="InterPro" id="IPR020546">
    <property type="entry name" value="ATP_synth_F1_dsu/esu_N"/>
</dbReference>
<dbReference type="InterPro" id="IPR036771">
    <property type="entry name" value="ATPsynth_dsu/esu_N"/>
</dbReference>
<dbReference type="NCBIfam" id="TIGR01216">
    <property type="entry name" value="ATP_synt_epsi"/>
    <property type="match status" value="1"/>
</dbReference>
<dbReference type="NCBIfam" id="NF009982">
    <property type="entry name" value="PRK13448.1"/>
    <property type="match status" value="1"/>
</dbReference>
<dbReference type="PANTHER" id="PTHR13822">
    <property type="entry name" value="ATP SYNTHASE DELTA/EPSILON CHAIN"/>
    <property type="match status" value="1"/>
</dbReference>
<dbReference type="PANTHER" id="PTHR13822:SF10">
    <property type="entry name" value="ATP SYNTHASE EPSILON CHAIN, CHLOROPLASTIC"/>
    <property type="match status" value="1"/>
</dbReference>
<dbReference type="Pfam" id="PF02823">
    <property type="entry name" value="ATP-synt_DE_N"/>
    <property type="match status" value="1"/>
</dbReference>
<dbReference type="SUPFAM" id="SSF51344">
    <property type="entry name" value="Epsilon subunit of F1F0-ATP synthase N-terminal domain"/>
    <property type="match status" value="1"/>
</dbReference>
<evidence type="ECO:0000255" key="1">
    <source>
        <dbReference type="HAMAP-Rule" id="MF_00530"/>
    </source>
</evidence>
<comment type="function">
    <text evidence="1">Produces ATP from ADP in the presence of a proton gradient across the membrane.</text>
</comment>
<comment type="subunit">
    <text>F-type ATPases have 2 components, CF(1) - the catalytic core - and CF(0) - the membrane proton channel. CF(1) has five subunits: alpha(3), beta(3), gamma(1), delta(1), epsilon(1). CF(0) has three main subunits: a, b and c.</text>
</comment>
<comment type="subcellular location">
    <subcellularLocation>
        <location evidence="1">Cell inner membrane</location>
        <topology evidence="1">Peripheral membrane protein</topology>
    </subcellularLocation>
</comment>
<comment type="similarity">
    <text evidence="1">Belongs to the ATPase epsilon chain family.</text>
</comment>
<name>ATPE1_NITHX</name>
<organism>
    <name type="scientific">Nitrobacter hamburgensis (strain DSM 10229 / NCIMB 13809 / X14)</name>
    <dbReference type="NCBI Taxonomy" id="323097"/>
    <lineage>
        <taxon>Bacteria</taxon>
        <taxon>Pseudomonadati</taxon>
        <taxon>Pseudomonadota</taxon>
        <taxon>Alphaproteobacteria</taxon>
        <taxon>Hyphomicrobiales</taxon>
        <taxon>Nitrobacteraceae</taxon>
        <taxon>Nitrobacter</taxon>
    </lineage>
</organism>
<gene>
    <name evidence="1" type="primary">atpC1</name>
    <name type="ordered locus">Nham_0528</name>
</gene>